<protein>
    <recommendedName>
        <fullName evidence="1">Catalase-peroxidase</fullName>
        <shortName evidence="1">CP</shortName>
        <ecNumber evidence="1">1.11.1.21</ecNumber>
    </recommendedName>
    <alternativeName>
        <fullName evidence="1">Peroxidase/catalase</fullName>
    </alternativeName>
</protein>
<keyword id="KW-0349">Heme</keyword>
<keyword id="KW-0376">Hydrogen peroxide</keyword>
<keyword id="KW-0408">Iron</keyword>
<keyword id="KW-0479">Metal-binding</keyword>
<keyword id="KW-0560">Oxidoreductase</keyword>
<keyword id="KW-0575">Peroxidase</keyword>
<keyword id="KW-1185">Reference proteome</keyword>
<keyword id="KW-0732">Signal</keyword>
<name>KATG_LEPBP</name>
<organism>
    <name type="scientific">Leptospira biflexa serovar Patoc (strain Patoc 1 / ATCC 23582 / Paris)</name>
    <dbReference type="NCBI Taxonomy" id="456481"/>
    <lineage>
        <taxon>Bacteria</taxon>
        <taxon>Pseudomonadati</taxon>
        <taxon>Spirochaetota</taxon>
        <taxon>Spirochaetia</taxon>
        <taxon>Leptospirales</taxon>
        <taxon>Leptospiraceae</taxon>
        <taxon>Leptospira</taxon>
    </lineage>
</organism>
<proteinExistence type="inferred from homology"/>
<dbReference type="EC" id="1.11.1.21" evidence="1"/>
<dbReference type="EMBL" id="CP000786">
    <property type="protein sequence ID" value="ABZ98582.1"/>
    <property type="molecule type" value="Genomic_DNA"/>
</dbReference>
<dbReference type="RefSeq" id="WP_012389443.1">
    <property type="nucleotide sequence ID" value="NC_010602.1"/>
</dbReference>
<dbReference type="SMR" id="B0SLJ6"/>
<dbReference type="STRING" id="456481.LEPBI_I2495"/>
<dbReference type="KEGG" id="lbi:LEPBI_I2495"/>
<dbReference type="HOGENOM" id="CLU_025424_2_0_12"/>
<dbReference type="OrthoDB" id="9759743at2"/>
<dbReference type="BioCyc" id="LBIF456481:LEPBI_RS12310-MONOMER"/>
<dbReference type="Proteomes" id="UP000001847">
    <property type="component" value="Chromosome I"/>
</dbReference>
<dbReference type="GO" id="GO:0005829">
    <property type="term" value="C:cytosol"/>
    <property type="evidence" value="ECO:0007669"/>
    <property type="project" value="TreeGrafter"/>
</dbReference>
<dbReference type="GO" id="GO:0004096">
    <property type="term" value="F:catalase activity"/>
    <property type="evidence" value="ECO:0007669"/>
    <property type="project" value="UniProtKB-UniRule"/>
</dbReference>
<dbReference type="GO" id="GO:0020037">
    <property type="term" value="F:heme binding"/>
    <property type="evidence" value="ECO:0007669"/>
    <property type="project" value="InterPro"/>
</dbReference>
<dbReference type="GO" id="GO:0046872">
    <property type="term" value="F:metal ion binding"/>
    <property type="evidence" value="ECO:0007669"/>
    <property type="project" value="UniProtKB-KW"/>
</dbReference>
<dbReference type="GO" id="GO:0070301">
    <property type="term" value="P:cellular response to hydrogen peroxide"/>
    <property type="evidence" value="ECO:0007669"/>
    <property type="project" value="TreeGrafter"/>
</dbReference>
<dbReference type="GO" id="GO:0042744">
    <property type="term" value="P:hydrogen peroxide catabolic process"/>
    <property type="evidence" value="ECO:0007669"/>
    <property type="project" value="UniProtKB-KW"/>
</dbReference>
<dbReference type="CDD" id="cd00649">
    <property type="entry name" value="catalase_peroxidase_1"/>
    <property type="match status" value="1"/>
</dbReference>
<dbReference type="CDD" id="cd08200">
    <property type="entry name" value="catalase_peroxidase_2"/>
    <property type="match status" value="1"/>
</dbReference>
<dbReference type="FunFam" id="1.10.420.10:FF:000002">
    <property type="entry name" value="Catalase-peroxidase"/>
    <property type="match status" value="1"/>
</dbReference>
<dbReference type="FunFam" id="1.10.420.10:FF:000004">
    <property type="entry name" value="Catalase-peroxidase"/>
    <property type="match status" value="1"/>
</dbReference>
<dbReference type="FunFam" id="1.10.520.10:FF:000002">
    <property type="entry name" value="Catalase-peroxidase"/>
    <property type="match status" value="1"/>
</dbReference>
<dbReference type="Gene3D" id="1.10.520.10">
    <property type="match status" value="2"/>
</dbReference>
<dbReference type="Gene3D" id="1.10.420.10">
    <property type="entry name" value="Peroxidase, domain 2"/>
    <property type="match status" value="2"/>
</dbReference>
<dbReference type="HAMAP" id="MF_01961">
    <property type="entry name" value="Catal_peroxid"/>
    <property type="match status" value="1"/>
</dbReference>
<dbReference type="InterPro" id="IPR000763">
    <property type="entry name" value="Catalase_peroxidase"/>
</dbReference>
<dbReference type="InterPro" id="IPR002016">
    <property type="entry name" value="Haem_peroxidase"/>
</dbReference>
<dbReference type="InterPro" id="IPR010255">
    <property type="entry name" value="Haem_peroxidase_sf"/>
</dbReference>
<dbReference type="InterPro" id="IPR019794">
    <property type="entry name" value="Peroxidases_AS"/>
</dbReference>
<dbReference type="InterPro" id="IPR019793">
    <property type="entry name" value="Peroxidases_heam-ligand_BS"/>
</dbReference>
<dbReference type="NCBIfam" id="TIGR00198">
    <property type="entry name" value="cat_per_HPI"/>
    <property type="match status" value="1"/>
</dbReference>
<dbReference type="NCBIfam" id="NF011635">
    <property type="entry name" value="PRK15061.1"/>
    <property type="match status" value="1"/>
</dbReference>
<dbReference type="PANTHER" id="PTHR30555:SF0">
    <property type="entry name" value="CATALASE-PEROXIDASE"/>
    <property type="match status" value="1"/>
</dbReference>
<dbReference type="PANTHER" id="PTHR30555">
    <property type="entry name" value="HYDROPEROXIDASE I, BIFUNCTIONAL CATALASE-PEROXIDASE"/>
    <property type="match status" value="1"/>
</dbReference>
<dbReference type="Pfam" id="PF00141">
    <property type="entry name" value="peroxidase"/>
    <property type="match status" value="2"/>
</dbReference>
<dbReference type="PRINTS" id="PR00460">
    <property type="entry name" value="BPEROXIDASE"/>
</dbReference>
<dbReference type="PRINTS" id="PR00458">
    <property type="entry name" value="PEROXIDASE"/>
</dbReference>
<dbReference type="SUPFAM" id="SSF48113">
    <property type="entry name" value="Heme-dependent peroxidases"/>
    <property type="match status" value="2"/>
</dbReference>
<dbReference type="PROSITE" id="PS00435">
    <property type="entry name" value="PEROXIDASE_1"/>
    <property type="match status" value="1"/>
</dbReference>
<dbReference type="PROSITE" id="PS00436">
    <property type="entry name" value="PEROXIDASE_2"/>
    <property type="match status" value="1"/>
</dbReference>
<dbReference type="PROSITE" id="PS50873">
    <property type="entry name" value="PEROXIDASE_4"/>
    <property type="match status" value="1"/>
</dbReference>
<feature type="signal peptide" evidence="1">
    <location>
        <begin position="1"/>
        <end position="21"/>
    </location>
</feature>
<feature type="chain" id="PRO_0000354825" description="Catalase-peroxidase">
    <location>
        <begin position="22"/>
        <end position="741"/>
    </location>
</feature>
<feature type="active site" description="Proton acceptor" evidence="1">
    <location>
        <position position="110"/>
    </location>
</feature>
<feature type="binding site" description="axial binding residue" evidence="1">
    <location>
        <position position="272"/>
    </location>
    <ligand>
        <name>heme b</name>
        <dbReference type="ChEBI" id="CHEBI:60344"/>
    </ligand>
    <ligandPart>
        <name>Fe</name>
        <dbReference type="ChEBI" id="CHEBI:18248"/>
    </ligandPart>
</feature>
<feature type="site" description="Transition state stabilizer" evidence="1">
    <location>
        <position position="106"/>
    </location>
</feature>
<feature type="cross-link" description="Tryptophyl-tyrosyl-methioninium (Trp-Tyr) (with M-257)" evidence="1">
    <location>
        <begin position="109"/>
        <end position="231"/>
    </location>
</feature>
<feature type="cross-link" description="Tryptophyl-tyrosyl-methioninium (Tyr-Met) (with W-109)" evidence="1">
    <location>
        <begin position="231"/>
        <end position="257"/>
    </location>
</feature>
<reference key="1">
    <citation type="journal article" date="2008" name="PLoS ONE">
        <title>Genome sequence of the saprophyte Leptospira biflexa provides insights into the evolution of Leptospira and the pathogenesis of leptospirosis.</title>
        <authorList>
            <person name="Picardeau M."/>
            <person name="Bulach D.M."/>
            <person name="Bouchier C."/>
            <person name="Zuerner R.L."/>
            <person name="Zidane N."/>
            <person name="Wilson P.J."/>
            <person name="Creno S."/>
            <person name="Kuczek E.S."/>
            <person name="Bommezzadri S."/>
            <person name="Davis J.C."/>
            <person name="McGrath A."/>
            <person name="Johnson M.J."/>
            <person name="Boursaux-Eude C."/>
            <person name="Seemann T."/>
            <person name="Rouy Z."/>
            <person name="Coppel R.L."/>
            <person name="Rood J.I."/>
            <person name="Lajus A."/>
            <person name="Davies J.K."/>
            <person name="Medigue C."/>
            <person name="Adler B."/>
        </authorList>
    </citation>
    <scope>NUCLEOTIDE SEQUENCE [LARGE SCALE GENOMIC DNA]</scope>
    <source>
        <strain>Patoc 1 / ATCC 23582 / Paris</strain>
    </source>
</reference>
<evidence type="ECO:0000255" key="1">
    <source>
        <dbReference type="HAMAP-Rule" id="MF_01961"/>
    </source>
</evidence>
<comment type="function">
    <text evidence="1">Bifunctional enzyme with both catalase and broad-spectrum peroxidase activity.</text>
</comment>
<comment type="catalytic activity">
    <reaction evidence="1">
        <text>H2O2 + AH2 = A + 2 H2O</text>
        <dbReference type="Rhea" id="RHEA:30275"/>
        <dbReference type="ChEBI" id="CHEBI:13193"/>
        <dbReference type="ChEBI" id="CHEBI:15377"/>
        <dbReference type="ChEBI" id="CHEBI:16240"/>
        <dbReference type="ChEBI" id="CHEBI:17499"/>
        <dbReference type="EC" id="1.11.1.21"/>
    </reaction>
</comment>
<comment type="catalytic activity">
    <reaction evidence="1">
        <text>2 H2O2 = O2 + 2 H2O</text>
        <dbReference type="Rhea" id="RHEA:20309"/>
        <dbReference type="ChEBI" id="CHEBI:15377"/>
        <dbReference type="ChEBI" id="CHEBI:15379"/>
        <dbReference type="ChEBI" id="CHEBI:16240"/>
        <dbReference type="EC" id="1.11.1.21"/>
    </reaction>
</comment>
<comment type="cofactor">
    <cofactor evidence="1">
        <name>heme b</name>
        <dbReference type="ChEBI" id="CHEBI:60344"/>
    </cofactor>
    <text evidence="1">Binds 1 heme b (iron(II)-protoporphyrin IX) group per dimer.</text>
</comment>
<comment type="subunit">
    <text evidence="1">Homodimer or homotetramer.</text>
</comment>
<comment type="PTM">
    <text evidence="1">Formation of the three residue Trp-Tyr-Met cross-link is important for the catalase, but not the peroxidase activity of the enzyme.</text>
</comment>
<comment type="similarity">
    <text evidence="1">Belongs to the peroxidase family. Peroxidase/catalase subfamily.</text>
</comment>
<gene>
    <name evidence="1" type="primary">katG</name>
    <name type="ordered locus">LEPBI_I2495</name>
</gene>
<accession>B0SLJ6</accession>
<sequence>MRNFRRFTIALLVLFLGPIGAADTKETPGMDRQNTSNQFWWPERLDLAPLRQHGSESNPLGRQFHYAKEFKELDIQTLKEEIKTVMKTSQDWWPADYGHYGPFFIRMAWHSAGTYRISDGRGGAGGGQQRFEPLNSWPDNANLDKARRLLWPIKKKYGKKISWADLMVLTGNVALESMGFKTYGFAGGRTDDWEADLVYWGPEKKFLEDQRYKGNRELKNPLAAVQMGLIYVNPEGPNGNPDPLAAAKDIRETFGRMAMNDEETVALIAGGHTFGKAHGKSDPSKHVGKEPAAAGLEEQGFGWKNNYKKGNAEDTITSGLEGAWTANPTKWTTQYLNNLFGFEWVQTKSPAGAIQWVPKDGAGANMVPDAHDKSLRHAPIMFTTDLALKFDPSYKVIAKRFQENPKEFELAFAKAWFKLTHRDMGPLTRYIGKDLPKEPLIWQDPVPAVNHKLVGPKEIESLKGKILKSGLSVPQLVRTAWASAASFRSTDMRGGANGARIRLSPQKNWPVNDPDELSKVLKKLEQIQEEFNKSGNKISLADLIVLAGNAAIEEAAKKAGVKVTVPFTPGRTDATIEQTDEYSFSVLEPKADAFRNYYGPGNLMSPTEMLVDRANMLSLSIPEMTVLLGGMRSLDANAGKSKHGILTTKPGVLSNDFFVNLLDMSTKWQKSEQTEGLYEGLDRKTGSKRWTATSVDLIFGSHSELRAVAEVYASDDAKEKFVKDFVSAWNKVMMLDRFDVK</sequence>